<sequence>MKRNFPKLIALSLIFSLSVTPIANAESNSNIKAKDKKHVQVNVEDKSVPTDVRNLAQKDYLSYVTSLDKIYNKEKASYTLGEPFKIYKFNKKSDGNYYFPVLNTEGNIDYIVTISPKITKYSSSSSKYTINVSPFLSKVLNQYKDQQITILTNSKGYYVVTQNHKAKLVLKTPRLEDKKLKKTESIPTGNNVTQLKQKASVTMPTSQFKSNNYTYNEQYINKLENFKIRETQGNNGWCAGYTMSELLNATYNTNKYHAEAVMRFLHPNLQGQRFQFTGLTPREMIYFGQTQGRSPQLLNRMTTYNEVDNLTKNNKGIAVLGSRVESRNGMHAGHAMAVVGNAKLDNGQEVIIIWNSWDNGFMTQDAKNNVIPVSNGDHYRWYSSIYGY</sequence>
<evidence type="ECO:0000250" key="1"/>
<evidence type="ECO:0000250" key="2">
    <source>
        <dbReference type="UniProtKB" id="P81297"/>
    </source>
</evidence>
<evidence type="ECO:0000255" key="3"/>
<evidence type="ECO:0000255" key="4">
    <source>
        <dbReference type="PROSITE-ProRule" id="PRU10089"/>
    </source>
</evidence>
<evidence type="ECO:0000305" key="5"/>
<feature type="signal peptide" evidence="3">
    <location>
        <begin position="1"/>
        <end position="25"/>
    </location>
</feature>
<feature type="propeptide" id="PRO_0000026547" evidence="1">
    <location>
        <begin position="26"/>
        <end position="214"/>
    </location>
</feature>
<feature type="chain" id="PRO_0000026548" description="Staphopain A">
    <location>
        <begin position="215"/>
        <end position="388"/>
    </location>
</feature>
<feature type="active site" evidence="4">
    <location>
        <position position="238"/>
    </location>
</feature>
<feature type="active site" evidence="4">
    <location>
        <position position="334"/>
    </location>
</feature>
<feature type="active site" evidence="4">
    <location>
        <position position="355"/>
    </location>
</feature>
<feature type="site" description="Cleavage" evidence="1">
    <location>
        <begin position="214"/>
        <end position="215"/>
    </location>
</feature>
<organism>
    <name type="scientific">Staphylococcus aureus (strain COL)</name>
    <dbReference type="NCBI Taxonomy" id="93062"/>
    <lineage>
        <taxon>Bacteria</taxon>
        <taxon>Bacillati</taxon>
        <taxon>Bacillota</taxon>
        <taxon>Bacilli</taxon>
        <taxon>Bacillales</taxon>
        <taxon>Staphylococcaceae</taxon>
        <taxon>Staphylococcus</taxon>
    </lineage>
</organism>
<keyword id="KW-0378">Hydrolase</keyword>
<keyword id="KW-0645">Protease</keyword>
<keyword id="KW-0964">Secreted</keyword>
<keyword id="KW-0732">Signal</keyword>
<keyword id="KW-0788">Thiol protease</keyword>
<keyword id="KW-0843">Virulence</keyword>
<keyword id="KW-0865">Zymogen</keyword>
<proteinExistence type="inferred from homology"/>
<reference key="1">
    <citation type="journal article" date="2005" name="J. Bacteriol.">
        <title>Insights on evolution of virulence and resistance from the complete genome analysis of an early methicillin-resistant Staphylococcus aureus strain and a biofilm-producing methicillin-resistant Staphylococcus epidermidis strain.</title>
        <authorList>
            <person name="Gill S.R."/>
            <person name="Fouts D.E."/>
            <person name="Archer G.L."/>
            <person name="Mongodin E.F."/>
            <person name="DeBoy R.T."/>
            <person name="Ravel J."/>
            <person name="Paulsen I.T."/>
            <person name="Kolonay J.F."/>
            <person name="Brinkac L.M."/>
            <person name="Beanan M.J."/>
            <person name="Dodson R.J."/>
            <person name="Daugherty S.C."/>
            <person name="Madupu R."/>
            <person name="Angiuoli S.V."/>
            <person name="Durkin A.S."/>
            <person name="Haft D.H."/>
            <person name="Vamathevan J.J."/>
            <person name="Khouri H."/>
            <person name="Utterback T.R."/>
            <person name="Lee C."/>
            <person name="Dimitrov G."/>
            <person name="Jiang L."/>
            <person name="Qin H."/>
            <person name="Weidman J."/>
            <person name="Tran K."/>
            <person name="Kang K.H."/>
            <person name="Hance I.R."/>
            <person name="Nelson K.E."/>
            <person name="Fraser C.M."/>
        </authorList>
    </citation>
    <scope>NUCLEOTIDE SEQUENCE [LARGE SCALE GENOMIC DNA]</scope>
    <source>
        <strain>COL</strain>
    </source>
</reference>
<comment type="function">
    <text evidence="2">Cysteine protease that plays an important role in the inhibition of host innate immune response. Cleaves host elastins found in connective tissues, pulmonary surfactant protein A in the lungs, and the chemokine receptor CXCR2 on leukocytes. Proteolytic cleavage of surfactant protein A impairs bacterial phagocytosis by neutrophils while CXCR2 degradation blocks neutrophil activation and chemotaxis. Additionally, promotes vascular leakage by activating the plasma kallikerin/kinin system, resulting in hypotension.</text>
</comment>
<comment type="catalytic activity">
    <reaction>
        <text>Broad endopeptidase action on proteins including elastin, but rather limited hydrolysis of small-molecule substrates. Assays are conveniently made with hemoglobin, casein or Z-Phe-Arg-NHMec as substrate.</text>
        <dbReference type="EC" id="3.4.22.48"/>
    </reaction>
</comment>
<comment type="activity regulation">
    <text evidence="1">Prematurely activated/folded staphopain A is inhibited by staphostatin A (ScpB), which is probably required to protect staphylococcal cytoplasmic proteins from degradation by ScpA.</text>
</comment>
<comment type="subunit">
    <text evidence="1">In the cytoplasm, prematurely activated/folded ScpA forms a stable non-covalent complex with ScpB.</text>
</comment>
<comment type="subcellular location">
    <subcellularLocation>
        <location evidence="2">Secreted</location>
    </subcellularLocation>
</comment>
<comment type="PTM">
    <text evidence="1">Cleavage leads to the activation of ScpA probably by an auto-catalytic manner.</text>
</comment>
<comment type="miscellaneous">
    <text evidence="1">The catalytic maturation of ScpA appears to reside outside the cascade of activation started by the metalloprotease aureolysin (aur).</text>
</comment>
<comment type="similarity">
    <text evidence="5">Belongs to the peptidase C47 family.</text>
</comment>
<dbReference type="EC" id="3.4.22.48"/>
<dbReference type="EMBL" id="CP000046">
    <property type="protein sequence ID" value="AAW36940.1"/>
    <property type="molecule type" value="Genomic_DNA"/>
</dbReference>
<dbReference type="RefSeq" id="WP_000827749.1">
    <property type="nucleotide sequence ID" value="NZ_JBGOFO010000006.1"/>
</dbReference>
<dbReference type="SMR" id="Q5HEL3"/>
<dbReference type="MEROPS" id="C47.001"/>
<dbReference type="KEGG" id="sac:SACOL1970"/>
<dbReference type="HOGENOM" id="CLU_069043_0_0_9"/>
<dbReference type="PRO" id="PR:Q5HEL3"/>
<dbReference type="Proteomes" id="UP000000530">
    <property type="component" value="Chromosome"/>
</dbReference>
<dbReference type="GO" id="GO:0005576">
    <property type="term" value="C:extracellular region"/>
    <property type="evidence" value="ECO:0007669"/>
    <property type="project" value="UniProtKB-SubCell"/>
</dbReference>
<dbReference type="GO" id="GO:0008234">
    <property type="term" value="F:cysteine-type peptidase activity"/>
    <property type="evidence" value="ECO:0007669"/>
    <property type="project" value="UniProtKB-KW"/>
</dbReference>
<dbReference type="GO" id="GO:0006508">
    <property type="term" value="P:proteolysis"/>
    <property type="evidence" value="ECO:0007669"/>
    <property type="project" value="UniProtKB-KW"/>
</dbReference>
<dbReference type="Gene3D" id="3.90.70.10">
    <property type="entry name" value="Cysteine proteinases"/>
    <property type="match status" value="1"/>
</dbReference>
<dbReference type="Gene3D" id="3.10.500.10">
    <property type="entry name" value="Staphopain proregion domain"/>
    <property type="match status" value="1"/>
</dbReference>
<dbReference type="InterPro" id="IPR046350">
    <property type="entry name" value="Cystatin_sf"/>
</dbReference>
<dbReference type="InterPro" id="IPR038765">
    <property type="entry name" value="Papain-like_cys_pep_sf"/>
</dbReference>
<dbReference type="InterPro" id="IPR025660">
    <property type="entry name" value="Pept_his_AS"/>
</dbReference>
<dbReference type="InterPro" id="IPR008750">
    <property type="entry name" value="Peptidase_C47"/>
</dbReference>
<dbReference type="InterPro" id="IPR028076">
    <property type="entry name" value="Staphopain_pro"/>
</dbReference>
<dbReference type="InterPro" id="IPR037155">
    <property type="entry name" value="Staphopain_pro_sf"/>
</dbReference>
<dbReference type="Pfam" id="PF05543">
    <property type="entry name" value="Peptidase_C47"/>
    <property type="match status" value="1"/>
</dbReference>
<dbReference type="Pfam" id="PF14731">
    <property type="entry name" value="Staphopain_pro"/>
    <property type="match status" value="1"/>
</dbReference>
<dbReference type="SUPFAM" id="SSF54403">
    <property type="entry name" value="Cystatin/monellin"/>
    <property type="match status" value="1"/>
</dbReference>
<dbReference type="SUPFAM" id="SSF54001">
    <property type="entry name" value="Cysteine proteinases"/>
    <property type="match status" value="1"/>
</dbReference>
<dbReference type="PROSITE" id="PS00639">
    <property type="entry name" value="THIOL_PROTEASE_HIS"/>
    <property type="match status" value="1"/>
</dbReference>
<accession>Q5HEL3</accession>
<name>SSPP_STAAC</name>
<gene>
    <name type="primary">sspP</name>
    <name type="synonym">scpA</name>
    <name type="synonym">sspB2</name>
    <name type="ordered locus">SACOL1970</name>
</gene>
<protein>
    <recommendedName>
        <fullName>Staphopain A</fullName>
        <ecNumber>3.4.22.48</ecNumber>
    </recommendedName>
    <alternativeName>
        <fullName>Staphylococcal cysteine proteinase A</fullName>
    </alternativeName>
    <alternativeName>
        <fullName>Staphylopain A</fullName>
    </alternativeName>
</protein>